<dbReference type="EC" id="3.4.22.37" evidence="1"/>
<dbReference type="EMBL" id="AP009380">
    <property type="protein sequence ID" value="BAG34488.1"/>
    <property type="molecule type" value="Genomic_DNA"/>
</dbReference>
<dbReference type="SMR" id="B2RM93"/>
<dbReference type="MEROPS" id="C25.001"/>
<dbReference type="KEGG" id="pgn:PGN_1970"/>
<dbReference type="eggNOG" id="COG1974">
    <property type="taxonomic scope" value="Bacteria"/>
</dbReference>
<dbReference type="HOGENOM" id="CLU_240727_0_0_10"/>
<dbReference type="PHI-base" id="PHI:11114"/>
<dbReference type="PHI-base" id="PHI:3702"/>
<dbReference type="PHI-base" id="PHI:7887"/>
<dbReference type="PHI-base" id="PHI:9709"/>
<dbReference type="Proteomes" id="UP000008842">
    <property type="component" value="Chromosome"/>
</dbReference>
<dbReference type="GO" id="GO:0005576">
    <property type="term" value="C:extracellular region"/>
    <property type="evidence" value="ECO:0007669"/>
    <property type="project" value="UniProtKB-SubCell"/>
</dbReference>
<dbReference type="GO" id="GO:0004197">
    <property type="term" value="F:cysteine-type endopeptidase activity"/>
    <property type="evidence" value="ECO:0007669"/>
    <property type="project" value="InterPro"/>
</dbReference>
<dbReference type="GO" id="GO:0046872">
    <property type="term" value="F:metal ion binding"/>
    <property type="evidence" value="ECO:0007669"/>
    <property type="project" value="UniProtKB-KW"/>
</dbReference>
<dbReference type="GO" id="GO:0006508">
    <property type="term" value="P:proteolysis"/>
    <property type="evidence" value="ECO:0007669"/>
    <property type="project" value="UniProtKB-KW"/>
</dbReference>
<dbReference type="CDD" id="cd10913">
    <property type="entry name" value="Peptidase_C25_N_gingipain"/>
    <property type="match status" value="1"/>
</dbReference>
<dbReference type="FunFam" id="2.60.40.10:FF:002823">
    <property type="entry name" value="Gingipain R1"/>
    <property type="match status" value="1"/>
</dbReference>
<dbReference type="FunFam" id="2.60.40.3800:FF:000001">
    <property type="entry name" value="Gingipain R2"/>
    <property type="match status" value="1"/>
</dbReference>
<dbReference type="FunFam" id="3.40.50.1460:FF:000031">
    <property type="entry name" value="Gingipain R2"/>
    <property type="match status" value="1"/>
</dbReference>
<dbReference type="Gene3D" id="2.60.120.200">
    <property type="match status" value="2"/>
</dbReference>
<dbReference type="Gene3D" id="2.60.40.3800">
    <property type="match status" value="1"/>
</dbReference>
<dbReference type="Gene3D" id="3.40.50.1460">
    <property type="match status" value="1"/>
</dbReference>
<dbReference type="Gene3D" id="3.40.50.10390">
    <property type="entry name" value="Gingipain r, domain 1"/>
    <property type="match status" value="1"/>
</dbReference>
<dbReference type="Gene3D" id="2.60.40.10">
    <property type="entry name" value="Immunoglobulins"/>
    <property type="match status" value="4"/>
</dbReference>
<dbReference type="InterPro" id="IPR029030">
    <property type="entry name" value="Caspase-like_dom_sf"/>
</dbReference>
<dbReference type="InterPro" id="IPR011628">
    <property type="entry name" value="Cleaved_adhesin"/>
</dbReference>
<dbReference type="InterPro" id="IPR001769">
    <property type="entry name" value="Gingipain"/>
</dbReference>
<dbReference type="InterPro" id="IPR039392">
    <property type="entry name" value="Gingipain_N"/>
</dbReference>
<dbReference type="InterPro" id="IPR029031">
    <property type="entry name" value="Gingipain_N_sf"/>
</dbReference>
<dbReference type="InterPro" id="IPR038490">
    <property type="entry name" value="Gingipain_propep_sf"/>
</dbReference>
<dbReference type="InterPro" id="IPR013783">
    <property type="entry name" value="Ig-like_fold"/>
</dbReference>
<dbReference type="InterPro" id="IPR014756">
    <property type="entry name" value="Ig_E-set"/>
</dbReference>
<dbReference type="InterPro" id="IPR018832">
    <property type="entry name" value="Pept_C25_gingipain_C"/>
</dbReference>
<dbReference type="InterPro" id="IPR005536">
    <property type="entry name" value="Peptidase_C25_Ig-like_domain"/>
</dbReference>
<dbReference type="InterPro" id="IPR012600">
    <property type="entry name" value="Propeptide_C25"/>
</dbReference>
<dbReference type="NCBIfam" id="NF038128">
    <property type="entry name" value="choice_anch_J"/>
    <property type="match status" value="2"/>
</dbReference>
<dbReference type="Pfam" id="PF07675">
    <property type="entry name" value="Cleaved_Adhesin"/>
    <property type="match status" value="2"/>
</dbReference>
<dbReference type="Pfam" id="PF10365">
    <property type="entry name" value="DUF2436"/>
    <property type="match status" value="2"/>
</dbReference>
<dbReference type="Pfam" id="PF01364">
    <property type="entry name" value="Peptidase_C25"/>
    <property type="match status" value="1"/>
</dbReference>
<dbReference type="Pfam" id="PF03785">
    <property type="entry name" value="Peptidase_C25_C"/>
    <property type="match status" value="1"/>
</dbReference>
<dbReference type="Pfam" id="PF08126">
    <property type="entry name" value="Propeptide_C25"/>
    <property type="match status" value="1"/>
</dbReference>
<dbReference type="SUPFAM" id="SSF52129">
    <property type="entry name" value="Caspase-like"/>
    <property type="match status" value="1"/>
</dbReference>
<dbReference type="SUPFAM" id="SSF81296">
    <property type="entry name" value="E set domains"/>
    <property type="match status" value="1"/>
</dbReference>
<reference evidence="7 8" key="1">
    <citation type="journal article" date="2008" name="DNA Res.">
        <title>Determination of the genome sequence of Porphyromonas gingivalis strain ATCC 33277 and genomic comparison with strain W83 revealed extensive genome rearrangements in P. gingivalis.</title>
        <authorList>
            <person name="Naito M."/>
            <person name="Hirakawa H."/>
            <person name="Yamashita A."/>
            <person name="Ohara N."/>
            <person name="Shoji M."/>
            <person name="Yukitake H."/>
            <person name="Nakayama K."/>
            <person name="Toh H."/>
            <person name="Yoshimura F."/>
            <person name="Kuhara S."/>
            <person name="Hattori M."/>
            <person name="Hayashi T."/>
            <person name="Nakayama K."/>
        </authorList>
    </citation>
    <scope>NUCLEOTIDE SEQUENCE [LARGE SCALE GENOMIC DNA]</scope>
    <source>
        <strain evidence="8">ATCC 33277 / DSM 20709 / CIP 103683 / JCM 12257 / NCTC 11834 / 2561</strain>
    </source>
</reference>
<reference key="2">
    <citation type="journal article" date="1998" name="J. Biol. Chem.">
        <title>Arg-gingipain acts as a major processing enzyme for various cell surface proteins in Porphyromonas gingivalis.</title>
        <authorList>
            <person name="Kadowaki T."/>
            <person name="Nakayama K."/>
            <person name="Yoshimura F."/>
            <person name="Okamoto K."/>
            <person name="Abe N."/>
            <person name="Yamamoto K."/>
        </authorList>
    </citation>
    <scope>FUNCTION</scope>
    <source>
        <strain>ATCC 33277 / DSM 20709 / CIP 103683 / JCM 12257 / NCTC 11834 / 2561</strain>
    </source>
</reference>
<organism>
    <name type="scientific">Porphyromonas gingivalis (strain ATCC 33277 / DSM 20709 / CIP 103683 / JCM 12257 / NCTC 11834 / 2561)</name>
    <dbReference type="NCBI Taxonomy" id="431947"/>
    <lineage>
        <taxon>Bacteria</taxon>
        <taxon>Pseudomonadati</taxon>
        <taxon>Bacteroidota</taxon>
        <taxon>Bacteroidia</taxon>
        <taxon>Bacteroidales</taxon>
        <taxon>Porphyromonadaceae</taxon>
        <taxon>Porphyromonas</taxon>
    </lineage>
</organism>
<accession>B2RM93</accession>
<keyword id="KW-0106">Calcium</keyword>
<keyword id="KW-0378">Hydrolase</keyword>
<keyword id="KW-0479">Metal-binding</keyword>
<keyword id="KW-0645">Protease</keyword>
<keyword id="KW-0964">Secreted</keyword>
<keyword id="KW-0732">Signal</keyword>
<keyword id="KW-0788">Thiol protease</keyword>
<keyword id="KW-0843">Virulence</keyword>
<keyword id="KW-0865">Zymogen</keyword>
<sequence>MNKFVSIALCSSLLGGMAFAQQTELGRNPNVRLLESTQQSVTKVQFRMDNLKFTEVQTPKGMAQVPTYTEGVNLSEKGMPTLPILSRSLAVSDTREMKVEVVSSKFIEKKNVLIAPSKGMIMRNEDPKKIPYVYGKSYSQNKFFPGEIATLDDPFILRDVRGQVVNFAPLQYNPVTKTLRIYTEITVAVSETSEQGKNILNKKGTFAGFEDTYKRMFMNYEPGRYTPVEEKQNGRMIVIVAKKYEGDIKDFVDWKNQRGLRTEVKVAEDIASPVTANAIQQFVKQEYEKEGNDLTYVLLVGDHKDIPAKITPGIKSDQVYGQIVGNDHYNEVFIGRFSCESKEDLKTQIDRTIHYERNITTEDKWLGQALCIASAEGGPSADNGESDIQHENVIANLLTQYGYTKIIKCYDPGVTPKNIIDAFNGGISLVNYTGHGSETAWGTSHFGTTHVKQLTNSNQLPFIFDVACVNGDFLFSMPCFAEALMRAQKDGKPTGTVAIIASTINQSWASPMRGQDEMNEILCEKHPNNIKRTFGGVTMNGMFAMVEKYKKDGEKMLDTWTVFGDPSLLVRTLVPTKMQVTAPAQINLTDASVNVSCDYNGAIATISANGKMFGSAVVENGTATINLTGLTNESTLTLTVVGYNKETVIKTINTNGEPNPYQPVSNLTATTQGQKVTLKWDAPSTKTNATTNTARSVDGIRELVLLSVSDAPELLRSGQAEIVLEAHDVWNDGSGYQILLDADHDQYGQVIPSDTHTLWPNCSVPANLFAPFEYTVPENADPSCSPTNMIMDGTASVNIPAGTYDFAIAAPQANAKIWIAGQGPTKEDDYVFEAGKKYHFLMKKMGSGDGTELTISEGGGSDYTYTVYRDGTKIKEGLTATTFEEDGVATGNHEYCVEVKYTAGVSPKVCKDVTVEGSNEFAPVQNLTGSAVGQKVTLKWDAPNGTPNPNPNPNPNPNPGTTTLSESFENGIPASWKTIDADGDGHGWKPGNAPGIAGYNSNGCVYSESFGLGGIGVLTPDNYLITPALDLPNGGKLTFWVCAQDANYASEHYAVYASSTGNDASNFTNALLEETITAKGVRSPEAIRGRIQGTWRQKTVDLPAGTKYVAFRHFQSTDMFYIDLDEVEIKANGKRADFTETFESSTHGEAPAEWTTIDADGDGQGWLCLSSGQLDWLTAHGGTNVVASFSWNGMALNPDNYLISKDVTGATKVKYYYAVNDGFPGDHYAVMISKTGTNAGDFTVVFEETPNGINKGGARFGLSTEANGAKPQSVWIERTVDLPAGTKYVAFRHYNCSDLNYILLDDIQFTMGGSPTPTDYTYTVYRDGTKIKEGLTETTFEEDGVATGNHEYCVEVKYTAGVSPKECVNVTINPTQFNPVKNLKAQPDGGDVVLKWEAPSAKKTEGSREVKRIGDGLFVTIEPANDVRANEAKVVLAADNVWGDNTGYQFLLDADHNTFGSVIPATGPLFTGTASSNLYSANFEYLIPANADPVVTTQNIIVTGQGEVVIPGGVYDYCITNPEPASGKMWIAGDGGNQPARYDDFTFEAGKKYTFTMRRAGMGDGTDMEVEDDSPASYTYTVYRDGTKIKEGLTETTYRDAGMSAQSHEYCVEVKYAAGVSPKVCVDYIPDGVADVTAQKPYTLTVVGKTITVTCQGEAMIYDMNGRRLAAGRNTVVYTAQGGYYAVMVVVDGKSYVEKLAVK</sequence>
<feature type="signal peptide" evidence="3">
    <location>
        <begin position="1"/>
        <end position="20"/>
    </location>
</feature>
<feature type="propeptide" id="PRO_0000436615" evidence="1">
    <location>
        <begin position="21"/>
        <end position="224"/>
    </location>
</feature>
<feature type="chain" id="PRO_5002781759" description="Gingipain R1">
    <location>
        <begin position="225"/>
        <end position="1703"/>
    </location>
</feature>
<feature type="region of interest" description="Disordered" evidence="4">
    <location>
        <begin position="940"/>
        <end position="968"/>
    </location>
</feature>
<feature type="compositionally biased region" description="Pro residues" evidence="4">
    <location>
        <begin position="946"/>
        <end position="958"/>
    </location>
</feature>
<feature type="active site" description="Proton donor" evidence="2">
    <location>
        <position position="435"/>
    </location>
</feature>
<feature type="active site" description="Nucleophile" evidence="2">
    <location>
        <position position="468"/>
    </location>
</feature>
<feature type="binding site" evidence="2">
    <location>
        <position position="302"/>
    </location>
    <ligand>
        <name>Ca(2+)</name>
        <dbReference type="ChEBI" id="CHEBI:29108"/>
        <label>1</label>
    </ligand>
</feature>
<feature type="binding site" evidence="2">
    <location>
        <position position="324"/>
    </location>
    <ligand>
        <name>Ca(2+)</name>
        <dbReference type="ChEBI" id="CHEBI:29108"/>
        <label>2</label>
    </ligand>
</feature>
<feature type="binding site" evidence="2">
    <location>
        <position position="327"/>
    </location>
    <ligand>
        <name>Ca(2+)</name>
        <dbReference type="ChEBI" id="CHEBI:29108"/>
        <label>2</label>
    </ligand>
</feature>
<feature type="binding site" evidence="2">
    <location>
        <position position="329"/>
    </location>
    <ligand>
        <name>Ca(2+)</name>
        <dbReference type="ChEBI" id="CHEBI:29108"/>
        <label>2</label>
    </ligand>
</feature>
<feature type="binding site" evidence="2">
    <location>
        <position position="331"/>
    </location>
    <ligand>
        <name>Ca(2+)</name>
        <dbReference type="ChEBI" id="CHEBI:29108"/>
        <label>2</label>
    </ligand>
</feature>
<feature type="binding site" evidence="2">
    <location>
        <position position="385"/>
    </location>
    <ligand>
        <name>Ca(2+)</name>
        <dbReference type="ChEBI" id="CHEBI:29108"/>
        <label>3</label>
    </ligand>
</feature>
<feature type="binding site" evidence="2">
    <location>
        <position position="390"/>
    </location>
    <ligand>
        <name>Ca(2+)</name>
        <dbReference type="ChEBI" id="CHEBI:29108"/>
        <label>3</label>
    </ligand>
</feature>
<feature type="binding site" evidence="2">
    <location>
        <position position="473"/>
    </location>
    <ligand>
        <name>Ca(2+)</name>
        <dbReference type="ChEBI" id="CHEBI:29108"/>
        <label>1</label>
    </ligand>
</feature>
<feature type="binding site" evidence="2">
    <location>
        <position position="482"/>
    </location>
    <ligand>
        <name>Ca(2+)</name>
        <dbReference type="ChEBI" id="CHEBI:29108"/>
        <label>1</label>
    </ligand>
</feature>
<feature type="binding site" evidence="2">
    <location>
        <position position="516"/>
    </location>
    <ligand>
        <name>Ca(2+)</name>
        <dbReference type="ChEBI" id="CHEBI:29108"/>
        <label>3</label>
    </ligand>
</feature>
<feature type="binding site" evidence="2">
    <location>
        <position position="517"/>
    </location>
    <ligand>
        <name>Ca(2+)</name>
        <dbReference type="ChEBI" id="CHEBI:29108"/>
        <label>4</label>
    </ligand>
</feature>
<feature type="binding site" evidence="2">
    <location>
        <position position="520"/>
    </location>
    <ligand>
        <name>Ca(2+)</name>
        <dbReference type="ChEBI" id="CHEBI:29108"/>
        <label>4</label>
    </ligand>
</feature>
<feature type="binding site" evidence="2">
    <location>
        <position position="526"/>
    </location>
    <ligand>
        <name>Ca(2+)</name>
        <dbReference type="ChEBI" id="CHEBI:29108"/>
        <label>4</label>
    </ligand>
</feature>
<name>CPG1_PORG3</name>
<proteinExistence type="inferred from homology"/>
<comment type="function">
    <text evidence="5 6">Thiol protease. Acts synergistically with RgpB to catalyze the maturation of fimbrial subunits, such as FimA (PubMed:9786913). Its proteolytic activity is a major factor in both periodontal tissue destruction and in evasion of host defense mechanisms (Probable).</text>
</comment>
<comment type="catalytic activity">
    <reaction evidence="1">
        <text>Hydrolysis of proteins and small molecule substrates, with a preference for Arg in P1.</text>
        <dbReference type="EC" id="3.4.22.37"/>
    </reaction>
</comment>
<comment type="subcellular location">
    <subcellularLocation>
        <location evidence="1">Secreted</location>
    </subcellularLocation>
</comment>
<comment type="similarity">
    <text evidence="6">Belongs to the peptidase C25 family.</text>
</comment>
<gene>
    <name evidence="7" type="primary">rgpA</name>
    <name evidence="7" type="ordered locus">PGN_1970</name>
</gene>
<evidence type="ECO:0000250" key="1">
    <source>
        <dbReference type="UniProtKB" id="P28784"/>
    </source>
</evidence>
<evidence type="ECO:0000250" key="2">
    <source>
        <dbReference type="UniProtKB" id="P95493"/>
    </source>
</evidence>
<evidence type="ECO:0000255" key="3"/>
<evidence type="ECO:0000256" key="4">
    <source>
        <dbReference type="SAM" id="MobiDB-lite"/>
    </source>
</evidence>
<evidence type="ECO:0000269" key="5">
    <source>
    </source>
</evidence>
<evidence type="ECO:0000305" key="6"/>
<evidence type="ECO:0000312" key="7">
    <source>
        <dbReference type="EMBL" id="BAG34488.1"/>
    </source>
</evidence>
<evidence type="ECO:0000312" key="8">
    <source>
        <dbReference type="Proteomes" id="UP000008842"/>
    </source>
</evidence>
<protein>
    <recommendedName>
        <fullName>Gingipain R1</fullName>
        <ecNumber evidence="1">3.4.22.37</ecNumber>
    </recommendedName>
    <alternativeName>
        <fullName>Arg-gingipain</fullName>
    </alternativeName>
</protein>